<name>Y990_STRM5</name>
<comment type="cofactor">
    <cofactor evidence="1">
        <name>Fe(2+)</name>
        <dbReference type="ChEBI" id="CHEBI:29033"/>
    </cofactor>
    <text evidence="1">Binds 1 Fe(2+) ion per subunit.</text>
</comment>
<comment type="cofactor">
    <cofactor evidence="1">
        <name>L-ascorbate</name>
        <dbReference type="ChEBI" id="CHEBI:38290"/>
    </cofactor>
</comment>
<feature type="chain" id="PRO_1000131221" description="PKHD-type hydroxylase Smal_0990">
    <location>
        <begin position="1"/>
        <end position="225"/>
    </location>
</feature>
<feature type="domain" description="Fe2OG dioxygenase" evidence="1">
    <location>
        <begin position="78"/>
        <end position="177"/>
    </location>
</feature>
<feature type="binding site" evidence="1">
    <location>
        <position position="96"/>
    </location>
    <ligand>
        <name>Fe cation</name>
        <dbReference type="ChEBI" id="CHEBI:24875"/>
    </ligand>
</feature>
<feature type="binding site" evidence="1">
    <location>
        <position position="98"/>
    </location>
    <ligand>
        <name>Fe cation</name>
        <dbReference type="ChEBI" id="CHEBI:24875"/>
    </ligand>
</feature>
<feature type="binding site" evidence="1">
    <location>
        <position position="158"/>
    </location>
    <ligand>
        <name>Fe cation</name>
        <dbReference type="ChEBI" id="CHEBI:24875"/>
    </ligand>
</feature>
<feature type="binding site" evidence="1">
    <location>
        <position position="168"/>
    </location>
    <ligand>
        <name>2-oxoglutarate</name>
        <dbReference type="ChEBI" id="CHEBI:16810"/>
    </ligand>
</feature>
<protein>
    <recommendedName>
        <fullName evidence="1">PKHD-type hydroxylase Smal_0990</fullName>
        <ecNumber evidence="1">1.14.11.-</ecNumber>
    </recommendedName>
</protein>
<dbReference type="EC" id="1.14.11.-" evidence="1"/>
<dbReference type="EMBL" id="CP001111">
    <property type="protein sequence ID" value="ACF50695.1"/>
    <property type="molecule type" value="Genomic_DNA"/>
</dbReference>
<dbReference type="RefSeq" id="WP_012510312.1">
    <property type="nucleotide sequence ID" value="NC_011071.1"/>
</dbReference>
<dbReference type="SMR" id="B4SN50"/>
<dbReference type="STRING" id="391008.Smal_0990"/>
<dbReference type="KEGG" id="smt:Smal_0990"/>
<dbReference type="eggNOG" id="COG3128">
    <property type="taxonomic scope" value="Bacteria"/>
</dbReference>
<dbReference type="HOGENOM" id="CLU_106663_0_0_6"/>
<dbReference type="OrthoDB" id="9812472at2"/>
<dbReference type="Proteomes" id="UP000001867">
    <property type="component" value="Chromosome"/>
</dbReference>
<dbReference type="GO" id="GO:0016706">
    <property type="term" value="F:2-oxoglutarate-dependent dioxygenase activity"/>
    <property type="evidence" value="ECO:0007669"/>
    <property type="project" value="UniProtKB-UniRule"/>
</dbReference>
<dbReference type="GO" id="GO:0005506">
    <property type="term" value="F:iron ion binding"/>
    <property type="evidence" value="ECO:0007669"/>
    <property type="project" value="UniProtKB-UniRule"/>
</dbReference>
<dbReference type="GO" id="GO:0031418">
    <property type="term" value="F:L-ascorbic acid binding"/>
    <property type="evidence" value="ECO:0007669"/>
    <property type="project" value="UniProtKB-KW"/>
</dbReference>
<dbReference type="GO" id="GO:0006974">
    <property type="term" value="P:DNA damage response"/>
    <property type="evidence" value="ECO:0007669"/>
    <property type="project" value="TreeGrafter"/>
</dbReference>
<dbReference type="GO" id="GO:0006879">
    <property type="term" value="P:intracellular iron ion homeostasis"/>
    <property type="evidence" value="ECO:0007669"/>
    <property type="project" value="TreeGrafter"/>
</dbReference>
<dbReference type="Gene3D" id="2.60.120.620">
    <property type="entry name" value="q2cbj1_9rhob like domain"/>
    <property type="match status" value="1"/>
</dbReference>
<dbReference type="Gene3D" id="4.10.860.20">
    <property type="entry name" value="Rabenosyn, Rab binding domain"/>
    <property type="match status" value="1"/>
</dbReference>
<dbReference type="HAMAP" id="MF_00657">
    <property type="entry name" value="Hydroxyl_YbiX"/>
    <property type="match status" value="1"/>
</dbReference>
<dbReference type="InterPro" id="IPR005123">
    <property type="entry name" value="Oxoglu/Fe-dep_dioxygenase_dom"/>
</dbReference>
<dbReference type="InterPro" id="IPR041097">
    <property type="entry name" value="PKHD_C"/>
</dbReference>
<dbReference type="InterPro" id="IPR023550">
    <property type="entry name" value="PKHD_hydroxylase"/>
</dbReference>
<dbReference type="InterPro" id="IPR006620">
    <property type="entry name" value="Pro_4_hyd_alph"/>
</dbReference>
<dbReference type="InterPro" id="IPR044862">
    <property type="entry name" value="Pro_4_hyd_alph_FE2OG_OXY"/>
</dbReference>
<dbReference type="NCBIfam" id="NF003974">
    <property type="entry name" value="PRK05467.1-3"/>
    <property type="match status" value="1"/>
</dbReference>
<dbReference type="NCBIfam" id="NF003975">
    <property type="entry name" value="PRK05467.1-4"/>
    <property type="match status" value="1"/>
</dbReference>
<dbReference type="PANTHER" id="PTHR41536">
    <property type="entry name" value="PKHD-TYPE HYDROXYLASE YBIX"/>
    <property type="match status" value="1"/>
</dbReference>
<dbReference type="PANTHER" id="PTHR41536:SF1">
    <property type="entry name" value="PKHD-TYPE HYDROXYLASE YBIX"/>
    <property type="match status" value="1"/>
</dbReference>
<dbReference type="Pfam" id="PF13640">
    <property type="entry name" value="2OG-FeII_Oxy_3"/>
    <property type="match status" value="1"/>
</dbReference>
<dbReference type="Pfam" id="PF18331">
    <property type="entry name" value="PKHD_C"/>
    <property type="match status" value="1"/>
</dbReference>
<dbReference type="SMART" id="SM00702">
    <property type="entry name" value="P4Hc"/>
    <property type="match status" value="1"/>
</dbReference>
<dbReference type="SUPFAM" id="SSF51197">
    <property type="entry name" value="Clavaminate synthase-like"/>
    <property type="match status" value="1"/>
</dbReference>
<dbReference type="PROSITE" id="PS51471">
    <property type="entry name" value="FE2OG_OXY"/>
    <property type="match status" value="1"/>
</dbReference>
<evidence type="ECO:0000255" key="1">
    <source>
        <dbReference type="HAMAP-Rule" id="MF_00657"/>
    </source>
</evidence>
<sequence length="225" mass="25120">MLLHIPDILSADQVADFRRRLDAADWTDGRETVGHLGAQAKHNQQLPEASPLRRELGEIILVALARHPLFFSAALPLKYLPPRFNRYSGGGTYGFHVDGAVMNLANGEQLRSDISCTLFLSAPDEYEGGELIISDTYGEHEVKLPAGDLIVYPSSSLHQVRPVTAGARVASFFWVQSMVRDDVQRRLLWEMDGSIERLRQTGGDAEAVLQLTGVYHNLLRRWSEV</sequence>
<keyword id="KW-0223">Dioxygenase</keyword>
<keyword id="KW-0408">Iron</keyword>
<keyword id="KW-0479">Metal-binding</keyword>
<keyword id="KW-0560">Oxidoreductase</keyword>
<keyword id="KW-0847">Vitamin C</keyword>
<proteinExistence type="inferred from homology"/>
<organism>
    <name type="scientific">Stenotrophomonas maltophilia (strain R551-3)</name>
    <dbReference type="NCBI Taxonomy" id="391008"/>
    <lineage>
        <taxon>Bacteria</taxon>
        <taxon>Pseudomonadati</taxon>
        <taxon>Pseudomonadota</taxon>
        <taxon>Gammaproteobacteria</taxon>
        <taxon>Lysobacterales</taxon>
        <taxon>Lysobacteraceae</taxon>
        <taxon>Stenotrophomonas</taxon>
        <taxon>Stenotrophomonas maltophilia group</taxon>
    </lineage>
</organism>
<accession>B4SN50</accession>
<gene>
    <name type="ordered locus">Smal_0990</name>
</gene>
<reference key="1">
    <citation type="submission" date="2008-06" db="EMBL/GenBank/DDBJ databases">
        <title>Complete sequence of Stenotrophomonas maltophilia R551-3.</title>
        <authorList>
            <consortium name="US DOE Joint Genome Institute"/>
            <person name="Lucas S."/>
            <person name="Copeland A."/>
            <person name="Lapidus A."/>
            <person name="Glavina del Rio T."/>
            <person name="Dalin E."/>
            <person name="Tice H."/>
            <person name="Pitluck S."/>
            <person name="Chain P."/>
            <person name="Malfatti S."/>
            <person name="Shin M."/>
            <person name="Vergez L."/>
            <person name="Lang D."/>
            <person name="Schmutz J."/>
            <person name="Larimer F."/>
            <person name="Land M."/>
            <person name="Hauser L."/>
            <person name="Kyrpides N."/>
            <person name="Mikhailova N."/>
            <person name="Taghavi S."/>
            <person name="Monchy S."/>
            <person name="Newman L."/>
            <person name="Vangronsveld J."/>
            <person name="van der Lelie D."/>
            <person name="Richardson P."/>
        </authorList>
    </citation>
    <scope>NUCLEOTIDE SEQUENCE [LARGE SCALE GENOMIC DNA]</scope>
    <source>
        <strain>R551-3</strain>
    </source>
</reference>